<accession>O59423</accession>
<reference key="1">
    <citation type="journal article" date="1998" name="DNA Res.">
        <title>Complete sequence and gene organization of the genome of a hyper-thermophilic archaebacterium, Pyrococcus horikoshii OT3.</title>
        <authorList>
            <person name="Kawarabayasi Y."/>
            <person name="Sawada M."/>
            <person name="Horikawa H."/>
            <person name="Haikawa Y."/>
            <person name="Hino Y."/>
            <person name="Yamamoto S."/>
            <person name="Sekine M."/>
            <person name="Baba S."/>
            <person name="Kosugi H."/>
            <person name="Hosoyama A."/>
            <person name="Nagai Y."/>
            <person name="Sakai M."/>
            <person name="Ogura K."/>
            <person name="Otsuka R."/>
            <person name="Nakazawa H."/>
            <person name="Takamiya M."/>
            <person name="Ohfuku Y."/>
            <person name="Funahashi T."/>
            <person name="Tanaka T."/>
            <person name="Kudoh Y."/>
            <person name="Yamazaki J."/>
            <person name="Kushida N."/>
            <person name="Oguchi A."/>
            <person name="Aoki K."/>
            <person name="Yoshizawa T."/>
            <person name="Nakamura Y."/>
            <person name="Robb F.T."/>
            <person name="Horikoshi K."/>
            <person name="Masuchi Y."/>
            <person name="Shizuya H."/>
            <person name="Kikuchi H."/>
        </authorList>
    </citation>
    <scope>NUCLEOTIDE SEQUENCE [LARGE SCALE GENOMIC DNA]</scope>
    <source>
        <strain>ATCC 700860 / DSM 12428 / JCM 9974 / NBRC 100139 / OT-3</strain>
    </source>
</reference>
<comment type="function">
    <text evidence="1">This protein binds specifically to 23S rRNA. It makes multiple contacts with different domains of the 23S rRNA in the assembled 50S subunit and ribosome.</text>
</comment>
<comment type="function">
    <text evidence="1">The globular domain of the protein is located near the polypeptide exit tunnel on the outside of the subunit, while an extended beta-hairpin is found that lines the wall of the exit tunnel in the center of the 70S ribosome.</text>
</comment>
<comment type="subunit">
    <text evidence="1">Part of the 50S ribosomal subunit.</text>
</comment>
<comment type="similarity">
    <text evidence="1">Belongs to the universal ribosomal protein uL22 family.</text>
</comment>
<dbReference type="EMBL" id="BA000001">
    <property type="protein sequence ID" value="BAA30889.1"/>
    <property type="molecule type" value="Genomic_DNA"/>
</dbReference>
<dbReference type="PIR" id="B71187">
    <property type="entry name" value="B71187"/>
</dbReference>
<dbReference type="RefSeq" id="WP_010885836.1">
    <property type="nucleotide sequence ID" value="NC_000961.1"/>
</dbReference>
<dbReference type="SMR" id="O59423"/>
<dbReference type="STRING" id="70601.gene:9378772"/>
<dbReference type="EnsemblBacteria" id="BAA30889">
    <property type="protein sequence ID" value="BAA30889"/>
    <property type="gene ID" value="BAA30889"/>
</dbReference>
<dbReference type="GeneID" id="1442618"/>
<dbReference type="KEGG" id="pho:PH1773"/>
<dbReference type="eggNOG" id="arCOG04098">
    <property type="taxonomic scope" value="Archaea"/>
</dbReference>
<dbReference type="OrthoDB" id="314984at2157"/>
<dbReference type="Proteomes" id="UP000000752">
    <property type="component" value="Chromosome"/>
</dbReference>
<dbReference type="GO" id="GO:0022625">
    <property type="term" value="C:cytosolic large ribosomal subunit"/>
    <property type="evidence" value="ECO:0007669"/>
    <property type="project" value="TreeGrafter"/>
</dbReference>
<dbReference type="GO" id="GO:0019843">
    <property type="term" value="F:rRNA binding"/>
    <property type="evidence" value="ECO:0007669"/>
    <property type="project" value="UniProtKB-UniRule"/>
</dbReference>
<dbReference type="GO" id="GO:0003735">
    <property type="term" value="F:structural constituent of ribosome"/>
    <property type="evidence" value="ECO:0007669"/>
    <property type="project" value="InterPro"/>
</dbReference>
<dbReference type="GO" id="GO:0002181">
    <property type="term" value="P:cytoplasmic translation"/>
    <property type="evidence" value="ECO:0007669"/>
    <property type="project" value="TreeGrafter"/>
</dbReference>
<dbReference type="CDD" id="cd00336">
    <property type="entry name" value="Ribosomal_L22"/>
    <property type="match status" value="1"/>
</dbReference>
<dbReference type="FunFam" id="3.90.470.10:FF:000015">
    <property type="entry name" value="50S ribosomal protein L22"/>
    <property type="match status" value="1"/>
</dbReference>
<dbReference type="Gene3D" id="3.90.470.10">
    <property type="entry name" value="Ribosomal protein L22/L17"/>
    <property type="match status" value="1"/>
</dbReference>
<dbReference type="HAMAP" id="MF_01331_A">
    <property type="entry name" value="Ribosomal_uL22_A"/>
    <property type="match status" value="1"/>
</dbReference>
<dbReference type="InterPro" id="IPR001063">
    <property type="entry name" value="Ribosomal_uL22"/>
</dbReference>
<dbReference type="InterPro" id="IPR018260">
    <property type="entry name" value="Ribosomal_uL22_CS"/>
</dbReference>
<dbReference type="InterPro" id="IPR005721">
    <property type="entry name" value="Ribosomal_uL22_euk/arc"/>
</dbReference>
<dbReference type="InterPro" id="IPR036394">
    <property type="entry name" value="Ribosomal_uL22_sf"/>
</dbReference>
<dbReference type="NCBIfam" id="NF003260">
    <property type="entry name" value="PRK04223.1"/>
    <property type="match status" value="1"/>
</dbReference>
<dbReference type="NCBIfam" id="TIGR01038">
    <property type="entry name" value="uL22_arch_euk"/>
    <property type="match status" value="1"/>
</dbReference>
<dbReference type="PANTHER" id="PTHR11593">
    <property type="entry name" value="60S RIBOSOMAL PROTEIN L17"/>
    <property type="match status" value="1"/>
</dbReference>
<dbReference type="PANTHER" id="PTHR11593:SF10">
    <property type="entry name" value="60S RIBOSOMAL PROTEIN L17"/>
    <property type="match status" value="1"/>
</dbReference>
<dbReference type="Pfam" id="PF00237">
    <property type="entry name" value="Ribosomal_L22"/>
    <property type="match status" value="1"/>
</dbReference>
<dbReference type="SUPFAM" id="SSF54843">
    <property type="entry name" value="Ribosomal protein L22"/>
    <property type="match status" value="1"/>
</dbReference>
<dbReference type="PROSITE" id="PS00464">
    <property type="entry name" value="RIBOSOMAL_L22"/>
    <property type="match status" value="1"/>
</dbReference>
<sequence>MGKRFGYSFQNFDPERMARASGRDLRISPKLAVEVCRELRGMMLNDALRYLDEVIALKRPVPLRRYNDSQGHKPGKGFGPGRYPVKVAKAIKKVLLNAKNNAEQKGLDPDKLKIIHIAAHRGPVLRGWYPRAFGRATPFNEQTTHIEVVVEEIRR</sequence>
<evidence type="ECO:0000255" key="1">
    <source>
        <dbReference type="HAMAP-Rule" id="MF_01331"/>
    </source>
</evidence>
<evidence type="ECO:0000305" key="2"/>
<protein>
    <recommendedName>
        <fullName evidence="1">Large ribosomal subunit protein uL22</fullName>
    </recommendedName>
    <alternativeName>
        <fullName evidence="2">50S ribosomal protein L22</fullName>
    </alternativeName>
</protein>
<name>RL22_PYRHO</name>
<feature type="chain" id="PRO_0000125285" description="Large ribosomal subunit protein uL22">
    <location>
        <begin position="1"/>
        <end position="155"/>
    </location>
</feature>
<proteinExistence type="inferred from homology"/>
<organism>
    <name type="scientific">Pyrococcus horikoshii (strain ATCC 700860 / DSM 12428 / JCM 9974 / NBRC 100139 / OT-3)</name>
    <dbReference type="NCBI Taxonomy" id="70601"/>
    <lineage>
        <taxon>Archaea</taxon>
        <taxon>Methanobacteriati</taxon>
        <taxon>Methanobacteriota</taxon>
        <taxon>Thermococci</taxon>
        <taxon>Thermococcales</taxon>
        <taxon>Thermococcaceae</taxon>
        <taxon>Pyrococcus</taxon>
    </lineage>
</organism>
<keyword id="KW-0687">Ribonucleoprotein</keyword>
<keyword id="KW-0689">Ribosomal protein</keyword>
<keyword id="KW-0694">RNA-binding</keyword>
<keyword id="KW-0699">rRNA-binding</keyword>
<gene>
    <name evidence="1" type="primary">rpl22</name>
    <name type="ordered locus">PH1773</name>
</gene>